<accession>B9IVB8</accession>
<dbReference type="EMBL" id="CP000227">
    <property type="protein sequence ID" value="ACM14042.1"/>
    <property type="molecule type" value="Genomic_DNA"/>
</dbReference>
<dbReference type="SMR" id="B9IVB8"/>
<dbReference type="KEGG" id="bcq:BCQ_3614"/>
<dbReference type="HOGENOM" id="CLU_033123_0_0_9"/>
<dbReference type="Proteomes" id="UP000000441">
    <property type="component" value="Chromosome"/>
</dbReference>
<dbReference type="GO" id="GO:0009376">
    <property type="term" value="C:HslUV protease complex"/>
    <property type="evidence" value="ECO:0007669"/>
    <property type="project" value="UniProtKB-UniRule"/>
</dbReference>
<dbReference type="GO" id="GO:0005524">
    <property type="term" value="F:ATP binding"/>
    <property type="evidence" value="ECO:0007669"/>
    <property type="project" value="UniProtKB-UniRule"/>
</dbReference>
<dbReference type="GO" id="GO:0016887">
    <property type="term" value="F:ATP hydrolysis activity"/>
    <property type="evidence" value="ECO:0007669"/>
    <property type="project" value="InterPro"/>
</dbReference>
<dbReference type="GO" id="GO:0008233">
    <property type="term" value="F:peptidase activity"/>
    <property type="evidence" value="ECO:0007669"/>
    <property type="project" value="InterPro"/>
</dbReference>
<dbReference type="GO" id="GO:0036402">
    <property type="term" value="F:proteasome-activating activity"/>
    <property type="evidence" value="ECO:0007669"/>
    <property type="project" value="UniProtKB-UniRule"/>
</dbReference>
<dbReference type="GO" id="GO:0043335">
    <property type="term" value="P:protein unfolding"/>
    <property type="evidence" value="ECO:0007669"/>
    <property type="project" value="UniProtKB-UniRule"/>
</dbReference>
<dbReference type="GO" id="GO:0051603">
    <property type="term" value="P:proteolysis involved in protein catabolic process"/>
    <property type="evidence" value="ECO:0007669"/>
    <property type="project" value="TreeGrafter"/>
</dbReference>
<dbReference type="CDD" id="cd19498">
    <property type="entry name" value="RecA-like_HslU"/>
    <property type="match status" value="1"/>
</dbReference>
<dbReference type="FunFam" id="3.40.50.300:FF:000220">
    <property type="entry name" value="ATP-dependent protease ATPase subunit HslU"/>
    <property type="match status" value="1"/>
</dbReference>
<dbReference type="Gene3D" id="1.10.8.60">
    <property type="match status" value="1"/>
</dbReference>
<dbReference type="Gene3D" id="1.10.8.10">
    <property type="entry name" value="DNA helicase RuvA subunit, C-terminal domain"/>
    <property type="match status" value="1"/>
</dbReference>
<dbReference type="Gene3D" id="3.40.50.300">
    <property type="entry name" value="P-loop containing nucleotide triphosphate hydrolases"/>
    <property type="match status" value="1"/>
</dbReference>
<dbReference type="HAMAP" id="MF_00249">
    <property type="entry name" value="HslU"/>
    <property type="match status" value="1"/>
</dbReference>
<dbReference type="InterPro" id="IPR003593">
    <property type="entry name" value="AAA+_ATPase"/>
</dbReference>
<dbReference type="InterPro" id="IPR050052">
    <property type="entry name" value="ATP-dep_Clp_protease_ClpX"/>
</dbReference>
<dbReference type="InterPro" id="IPR003959">
    <property type="entry name" value="ATPase_AAA_core"/>
</dbReference>
<dbReference type="InterPro" id="IPR019489">
    <property type="entry name" value="Clp_ATPase_C"/>
</dbReference>
<dbReference type="InterPro" id="IPR004491">
    <property type="entry name" value="HslU"/>
</dbReference>
<dbReference type="InterPro" id="IPR027417">
    <property type="entry name" value="P-loop_NTPase"/>
</dbReference>
<dbReference type="NCBIfam" id="TIGR00390">
    <property type="entry name" value="hslU"/>
    <property type="match status" value="1"/>
</dbReference>
<dbReference type="NCBIfam" id="NF003544">
    <property type="entry name" value="PRK05201.1"/>
    <property type="match status" value="1"/>
</dbReference>
<dbReference type="PANTHER" id="PTHR48102">
    <property type="entry name" value="ATP-DEPENDENT CLP PROTEASE ATP-BINDING SUBUNIT CLPX-LIKE, MITOCHONDRIAL-RELATED"/>
    <property type="match status" value="1"/>
</dbReference>
<dbReference type="PANTHER" id="PTHR48102:SF3">
    <property type="entry name" value="ATP-DEPENDENT PROTEASE ATPASE SUBUNIT HSLU"/>
    <property type="match status" value="1"/>
</dbReference>
<dbReference type="Pfam" id="PF00004">
    <property type="entry name" value="AAA"/>
    <property type="match status" value="1"/>
</dbReference>
<dbReference type="Pfam" id="PF07724">
    <property type="entry name" value="AAA_2"/>
    <property type="match status" value="1"/>
</dbReference>
<dbReference type="Pfam" id="PF10431">
    <property type="entry name" value="ClpB_D2-small"/>
    <property type="match status" value="1"/>
</dbReference>
<dbReference type="SMART" id="SM00382">
    <property type="entry name" value="AAA"/>
    <property type="match status" value="1"/>
</dbReference>
<dbReference type="SMART" id="SM01086">
    <property type="entry name" value="ClpB_D2-small"/>
    <property type="match status" value="1"/>
</dbReference>
<dbReference type="SUPFAM" id="SSF52540">
    <property type="entry name" value="P-loop containing nucleoside triphosphate hydrolases"/>
    <property type="match status" value="1"/>
</dbReference>
<name>HSLU_BACCQ</name>
<gene>
    <name evidence="1" type="primary">hslU</name>
    <name type="ordered locus">BCQ_3614</name>
</gene>
<proteinExistence type="inferred from homology"/>
<feature type="chain" id="PRO_1000125428" description="ATP-dependent protease ATPase subunit HslU">
    <location>
        <begin position="1"/>
        <end position="463"/>
    </location>
</feature>
<feature type="binding site" evidence="1">
    <location>
        <position position="19"/>
    </location>
    <ligand>
        <name>ATP</name>
        <dbReference type="ChEBI" id="CHEBI:30616"/>
    </ligand>
</feature>
<feature type="binding site" evidence="1">
    <location>
        <begin position="61"/>
        <end position="66"/>
    </location>
    <ligand>
        <name>ATP</name>
        <dbReference type="ChEBI" id="CHEBI:30616"/>
    </ligand>
</feature>
<feature type="binding site" evidence="1">
    <location>
        <position position="277"/>
    </location>
    <ligand>
        <name>ATP</name>
        <dbReference type="ChEBI" id="CHEBI:30616"/>
    </ligand>
</feature>
<feature type="binding site" evidence="1">
    <location>
        <position position="341"/>
    </location>
    <ligand>
        <name>ATP</name>
        <dbReference type="ChEBI" id="CHEBI:30616"/>
    </ligand>
</feature>
<feature type="binding site" evidence="1">
    <location>
        <position position="413"/>
    </location>
    <ligand>
        <name>ATP</name>
        <dbReference type="ChEBI" id="CHEBI:30616"/>
    </ligand>
</feature>
<evidence type="ECO:0000255" key="1">
    <source>
        <dbReference type="HAMAP-Rule" id="MF_00249"/>
    </source>
</evidence>
<keyword id="KW-0067">ATP-binding</keyword>
<keyword id="KW-0143">Chaperone</keyword>
<keyword id="KW-0963">Cytoplasm</keyword>
<keyword id="KW-0547">Nucleotide-binding</keyword>
<sequence>MHLHFTPRQIVEKLDQYIIGQKDAKKAVAVALRNRYRRSKLAENLRDEIAPKNILMIGPTGVGKTEVARRMAKLVGAPFIKVEATKFTEVGYVGRDVESMVRDLVETSVRIVKEEMVVKVQDKAEEQANQRLVEILVPSPEKQSGFKNPLEMLFGGAQNSNQTTDSQEDVEIEKKRQDVERKLAAGLLEDEIVSIEVTEQQSSMFDMLQGTGMEQMGMNFQDALGSFMPKKTKKRKLSVKEARKVLTNEEAQRLIDMDEVTQEAVYRAEQLGIIFIDEIDKIAGKQSNSVDVSREGVQRDILPIVEGSNVATKYGSVKTDYILFVAAGAFHMSKPSDLIPELQGRFPIRVELTKLSTDDFVKILIEPDNALIKQYIALLATEGIEIEFSDEAIRKIAEIAYQVNQDTDNIGARRLHTIMEKLLEDLSFEASEITLEKITITPQYVEEKLATIAKNKDVSQFIL</sequence>
<comment type="function">
    <text evidence="1">ATPase subunit of a proteasome-like degradation complex; this subunit has chaperone activity. The binding of ATP and its subsequent hydrolysis by HslU are essential for unfolding of protein substrates subsequently hydrolyzed by HslV. HslU recognizes the N-terminal part of its protein substrates and unfolds these before they are guided to HslV for hydrolysis.</text>
</comment>
<comment type="subunit">
    <text evidence="1">A double ring-shaped homohexamer of HslV is capped on each side by a ring-shaped HslU homohexamer. The assembly of the HslU/HslV complex is dependent on binding of ATP.</text>
</comment>
<comment type="subcellular location">
    <subcellularLocation>
        <location evidence="1">Cytoplasm</location>
    </subcellularLocation>
</comment>
<comment type="similarity">
    <text evidence="1">Belongs to the ClpX chaperone family. HslU subfamily.</text>
</comment>
<protein>
    <recommendedName>
        <fullName evidence="1">ATP-dependent protease ATPase subunit HslU</fullName>
    </recommendedName>
    <alternativeName>
        <fullName evidence="1">Unfoldase HslU</fullName>
    </alternativeName>
</protein>
<organism>
    <name type="scientific">Bacillus cereus (strain Q1)</name>
    <dbReference type="NCBI Taxonomy" id="361100"/>
    <lineage>
        <taxon>Bacteria</taxon>
        <taxon>Bacillati</taxon>
        <taxon>Bacillota</taxon>
        <taxon>Bacilli</taxon>
        <taxon>Bacillales</taxon>
        <taxon>Bacillaceae</taxon>
        <taxon>Bacillus</taxon>
        <taxon>Bacillus cereus group</taxon>
    </lineage>
</organism>
<reference key="1">
    <citation type="journal article" date="2009" name="J. Bacteriol.">
        <title>Complete genome sequence of the extremophilic Bacillus cereus strain Q1 with industrial applications.</title>
        <authorList>
            <person name="Xiong Z."/>
            <person name="Jiang Y."/>
            <person name="Qi D."/>
            <person name="Lu H."/>
            <person name="Yang F."/>
            <person name="Yang J."/>
            <person name="Chen L."/>
            <person name="Sun L."/>
            <person name="Xu X."/>
            <person name="Xue Y."/>
            <person name="Zhu Y."/>
            <person name="Jin Q."/>
        </authorList>
    </citation>
    <scope>NUCLEOTIDE SEQUENCE [LARGE SCALE GENOMIC DNA]</scope>
    <source>
        <strain>Q1</strain>
    </source>
</reference>